<proteinExistence type="evidence at protein level"/>
<evidence type="ECO:0000269" key="1">
    <source>
    </source>
</evidence>
<evidence type="ECO:0000269" key="2">
    <source>
    </source>
</evidence>
<evidence type="ECO:0000269" key="3">
    <source>
    </source>
</evidence>
<evidence type="ECO:0000269" key="4">
    <source>
    </source>
</evidence>
<evidence type="ECO:0000269" key="5">
    <source>
    </source>
</evidence>
<evidence type="ECO:0000303" key="6">
    <source>
    </source>
</evidence>
<evidence type="ECO:0000303" key="7">
    <source>
    </source>
</evidence>
<evidence type="ECO:0000305" key="8"/>
<evidence type="ECO:0007744" key="9">
    <source>
        <dbReference type="PDB" id="5LKB"/>
    </source>
</evidence>
<evidence type="ECO:0007744" key="10">
    <source>
        <dbReference type="PDB" id="5LKD"/>
    </source>
</evidence>
<evidence type="ECO:0007829" key="11">
    <source>
        <dbReference type="PDB" id="5LKB"/>
    </source>
</evidence>
<evidence type="ECO:0007829" key="12">
    <source>
        <dbReference type="PDB" id="5LKD"/>
    </source>
</evidence>
<accession>P36156</accession>
<accession>D6VXD6</accession>
<organism>
    <name type="scientific">Saccharomyces cerevisiae (strain ATCC 204508 / S288c)</name>
    <name type="common">Baker's yeast</name>
    <dbReference type="NCBI Taxonomy" id="559292"/>
    <lineage>
        <taxon>Eukaryota</taxon>
        <taxon>Fungi</taxon>
        <taxon>Dikarya</taxon>
        <taxon>Ascomycota</taxon>
        <taxon>Saccharomycotina</taxon>
        <taxon>Saccharomycetes</taxon>
        <taxon>Saccharomycetales</taxon>
        <taxon>Saccharomycetaceae</taxon>
        <taxon>Saccharomyces</taxon>
    </lineage>
</organism>
<gene>
    <name evidence="7" type="primary">ECM4</name>
    <name evidence="6" type="synonym">GTO2</name>
    <name type="ordered locus">YKR076W</name>
</gene>
<reference key="1">
    <citation type="journal article" date="1994" name="Nature">
        <title>Complete DNA sequence of yeast chromosome XI.</title>
        <authorList>
            <person name="Dujon B."/>
            <person name="Alexandraki D."/>
            <person name="Andre B."/>
            <person name="Ansorge W."/>
            <person name="Baladron V."/>
            <person name="Ballesta J.P.G."/>
            <person name="Banrevi A."/>
            <person name="Bolle P.-A."/>
            <person name="Bolotin-Fukuhara M."/>
            <person name="Bossier P."/>
            <person name="Bou G."/>
            <person name="Boyer J."/>
            <person name="Buitrago M.J."/>
            <person name="Cheret G."/>
            <person name="Colleaux L."/>
            <person name="Daignan-Fornier B."/>
            <person name="del Rey F."/>
            <person name="Dion C."/>
            <person name="Domdey H."/>
            <person name="Duesterhoeft A."/>
            <person name="Duesterhus S."/>
            <person name="Entian K.-D."/>
            <person name="Erfle H."/>
            <person name="Esteban P.F."/>
            <person name="Feldmann H."/>
            <person name="Fernandes L."/>
            <person name="Fobo G.M."/>
            <person name="Fritz C."/>
            <person name="Fukuhara H."/>
            <person name="Gabel C."/>
            <person name="Gaillon L."/>
            <person name="Garcia-Cantalejo J.M."/>
            <person name="Garcia-Ramirez J.J."/>
            <person name="Gent M.E."/>
            <person name="Ghazvini M."/>
            <person name="Goffeau A."/>
            <person name="Gonzalez A."/>
            <person name="Grothues D."/>
            <person name="Guerreiro P."/>
            <person name="Hegemann J.H."/>
            <person name="Hewitt N."/>
            <person name="Hilger F."/>
            <person name="Hollenberg C.P."/>
            <person name="Horaitis O."/>
            <person name="Indge K.J."/>
            <person name="Jacquier A."/>
            <person name="James C.M."/>
            <person name="Jauniaux J.-C."/>
            <person name="Jimenez A."/>
            <person name="Keuchel H."/>
            <person name="Kirchrath L."/>
            <person name="Kleine K."/>
            <person name="Koetter P."/>
            <person name="Legrain P."/>
            <person name="Liebl S."/>
            <person name="Louis E.J."/>
            <person name="Maia e Silva A."/>
            <person name="Marck C."/>
            <person name="Monnier A.-L."/>
            <person name="Moestl D."/>
            <person name="Mueller S."/>
            <person name="Obermaier B."/>
            <person name="Oliver S.G."/>
            <person name="Pallier C."/>
            <person name="Pascolo S."/>
            <person name="Pfeiffer F."/>
            <person name="Philippsen P."/>
            <person name="Planta R.J."/>
            <person name="Pohl F.M."/>
            <person name="Pohl T.M."/>
            <person name="Poehlmann R."/>
            <person name="Portetelle D."/>
            <person name="Purnelle B."/>
            <person name="Puzos V."/>
            <person name="Ramezani Rad M."/>
            <person name="Rasmussen S.W."/>
            <person name="Remacha M.A."/>
            <person name="Revuelta J.L."/>
            <person name="Richard G.-F."/>
            <person name="Rieger M."/>
            <person name="Rodrigues-Pousada C."/>
            <person name="Rose M."/>
            <person name="Rupp T."/>
            <person name="Santos M.A."/>
            <person name="Schwager C."/>
            <person name="Sensen C."/>
            <person name="Skala J."/>
            <person name="Soares H."/>
            <person name="Sor F."/>
            <person name="Stegemann J."/>
            <person name="Tettelin H."/>
            <person name="Thierry A."/>
            <person name="Tzermia M."/>
            <person name="Urrestarazu L.A."/>
            <person name="van Dyck L."/>
            <person name="van Vliet-Reedijk J.C."/>
            <person name="Valens M."/>
            <person name="Vandenbol M."/>
            <person name="Vilela C."/>
            <person name="Vissers S."/>
            <person name="von Wettstein D."/>
            <person name="Voss H."/>
            <person name="Wiemann S."/>
            <person name="Xu G."/>
            <person name="Zimmermann J."/>
            <person name="Haasemann M."/>
            <person name="Becker I."/>
            <person name="Mewes H.-W."/>
        </authorList>
    </citation>
    <scope>NUCLEOTIDE SEQUENCE [LARGE SCALE GENOMIC DNA]</scope>
    <source>
        <strain>ATCC 204508 / S288c</strain>
    </source>
</reference>
<reference key="2">
    <citation type="journal article" date="2014" name="G3 (Bethesda)">
        <title>The reference genome sequence of Saccharomyces cerevisiae: Then and now.</title>
        <authorList>
            <person name="Engel S.R."/>
            <person name="Dietrich F.S."/>
            <person name="Fisk D.G."/>
            <person name="Binkley G."/>
            <person name="Balakrishnan R."/>
            <person name="Costanzo M.C."/>
            <person name="Dwight S.S."/>
            <person name="Hitz B.C."/>
            <person name="Karra K."/>
            <person name="Nash R.S."/>
            <person name="Weng S."/>
            <person name="Wong E.D."/>
            <person name="Lloyd P."/>
            <person name="Skrzypek M.S."/>
            <person name="Miyasato S.R."/>
            <person name="Simison M."/>
            <person name="Cherry J.M."/>
        </authorList>
    </citation>
    <scope>GENOME REANNOTATION</scope>
    <source>
        <strain>ATCC 204508 / S288c</strain>
    </source>
</reference>
<reference key="3">
    <citation type="journal article" date="1997" name="Genetics">
        <title>Large scale identification of genes involved in cell surface biosynthesis and architecture in Saccharomyces cerevisiae.</title>
        <authorList>
            <person name="Lussier M."/>
            <person name="White A.-M."/>
            <person name="Sheraton J."/>
            <person name="di Paolo T."/>
            <person name="Treadwell J."/>
            <person name="Southard S.B."/>
            <person name="Horenstein C.I."/>
            <person name="Chen-Weiner J."/>
            <person name="Ram A.F.J."/>
            <person name="Kapteyn J.C."/>
            <person name="Roemer T.W."/>
            <person name="Vo D.H."/>
            <person name="Bondoc D.C."/>
            <person name="Hall J."/>
            <person name="Zhong W.-W."/>
            <person name="Sdicu A.-M."/>
            <person name="Davies J."/>
            <person name="Klis F.M."/>
            <person name="Robbins P.W."/>
            <person name="Bussey H."/>
        </authorList>
    </citation>
    <scope>IDENTIFICATION</scope>
</reference>
<reference key="4">
    <citation type="journal article" date="2003" name="Nature">
        <title>Global analysis of protein localization in budding yeast.</title>
        <authorList>
            <person name="Huh W.-K."/>
            <person name="Falvo J.V."/>
            <person name="Gerke L.C."/>
            <person name="Carroll A.S."/>
            <person name="Howson R.W."/>
            <person name="Weissman J.S."/>
            <person name="O'Shea E.K."/>
        </authorList>
    </citation>
    <scope>SUBCELLULAR LOCATION [LARGE SCALE ANALYSIS]</scope>
</reference>
<reference key="5">
    <citation type="journal article" date="2003" name="Nature">
        <title>Global analysis of protein expression in yeast.</title>
        <authorList>
            <person name="Ghaemmaghami S."/>
            <person name="Huh W.-K."/>
            <person name="Bower K."/>
            <person name="Howson R.W."/>
            <person name="Belle A."/>
            <person name="Dephoure N."/>
            <person name="O'Shea E.K."/>
            <person name="Weissman J.S."/>
        </authorList>
    </citation>
    <scope>LEVEL OF PROTEIN EXPRESSION [LARGE SCALE ANALYSIS]</scope>
</reference>
<reference key="6">
    <citation type="journal article" date="2006" name="Biochem. J.">
        <title>Saccharomyces cerevisiae cells have three Omega class glutathione S-transferases acting as 1-Cys thiol transferases.</title>
        <authorList>
            <person name="Garcera A."/>
            <person name="Barreto L."/>
            <person name="Piedrafita L."/>
            <person name="Tamarit J."/>
            <person name="Herrero E."/>
        </authorList>
    </citation>
    <scope>FUNCTION</scope>
    <scope>ENZYME ACTIVITY</scope>
    <scope>ACTIVE SITE</scope>
    <scope>BIOPHYSICOCHEMICAL PROPERTIES</scope>
    <scope>INDUCTION</scope>
    <scope>MUTAGENESIS OF CYS-46; ARG-51; GLU-173; SER-174; LEU-246; GLY-280 AND ASP-287</scope>
</reference>
<reference key="7">
    <citation type="journal article" date="2006" name="Eukaryot. Cell">
        <title>A peroxisomal glutathione transferase of Saccharomyces cerevisiae is functionally related to sulfur amino acid metabolism.</title>
        <authorList>
            <person name="Barreto L."/>
            <person name="Garcera A."/>
            <person name="Jansson K."/>
            <person name="Sunnerhagen P."/>
            <person name="Herrero E."/>
        </authorList>
    </citation>
    <scope>SUBCELLULAR LOCATION</scope>
    <scope>INDUCTION</scope>
</reference>
<reference evidence="9 10" key="8">
    <citation type="journal article" date="2016" name="PLoS ONE">
        <title>Crystal Structure of Saccharomyces cerevisiae ECM4, a Xi-Class Glutathione Transferase that Reacts with Glutathionyl-(hydro)quinones.</title>
        <authorList>
            <person name="Schwartz M."/>
            <person name="Didierjean C."/>
            <person name="Hecker A."/>
            <person name="Girardet J.M."/>
            <person name="Morel-Rouhier M."/>
            <person name="Gelhaye E."/>
            <person name="Favier F."/>
        </authorList>
    </citation>
    <scope>X-RAY CRYSTALLOGRAPHY (1.45 ANGSTROMS) IN COMPLEX WITH GLUTATHIONE</scope>
    <scope>SUBUNIT</scope>
    <scope>ACTIVE SITE</scope>
</reference>
<sequence length="370" mass="43274">MSKQWASGTNGAFKRQVSSFRETISKQHPIYKPAKGRYWLYVSLACPWAHRTLITRALKGLTSVIGCSVVHWHLDEKGWRFLDMEKQLEDSEDFLEHWHDVAGGIRTAKEDSSKSFAEIKNDSQRFMVDATNEPHYGYKRISDLYYKSDPQYSARFTVPVLWDLETQTIVNNESSEIIRILNSSAFDEFVDDDHKKTDLVPAQLKTQIDDFNSWVYDSINNGVYKTGFAEKAEVYESEVNNVFEHLDKVEKILSDKYSKLKAKYGEEDRQKILGEFFTVGDQLTEADIRLYTTVIRFDPVYVQHFKCNFTSIRAGYPFIHLWVRNLYWNYDAFRYTTDFDHIKLHYTRSHTRINPLGITPLGPKPDIRPL</sequence>
<comment type="function">
    <text evidence="3">Active as '1-Cys' thiol transferase against beta-hydroxyethyl disulfide (HED), as dehydroascorbate reductase and as dimethylarsinic acid reductase, while not active against the standard GST substrate 1-chloro-2,4-dinitrobenzene (CDNB). May be involved in cell wall organization and biogenesis.</text>
</comment>
<comment type="catalytic activity">
    <reaction evidence="3">
        <text>RX + glutathione = an S-substituted glutathione + a halide anion + H(+)</text>
        <dbReference type="Rhea" id="RHEA:16437"/>
        <dbReference type="ChEBI" id="CHEBI:15378"/>
        <dbReference type="ChEBI" id="CHEBI:16042"/>
        <dbReference type="ChEBI" id="CHEBI:17792"/>
        <dbReference type="ChEBI" id="CHEBI:57925"/>
        <dbReference type="ChEBI" id="CHEBI:90779"/>
        <dbReference type="EC" id="2.5.1.18"/>
    </reaction>
</comment>
<comment type="catalytic activity">
    <reaction evidence="3">
        <text>L-dehydroascorbate + 2 glutathione = glutathione disulfide + L-ascorbate</text>
        <dbReference type="Rhea" id="RHEA:24424"/>
        <dbReference type="ChEBI" id="CHEBI:38290"/>
        <dbReference type="ChEBI" id="CHEBI:57925"/>
        <dbReference type="ChEBI" id="CHEBI:58297"/>
        <dbReference type="ChEBI" id="CHEBI:58539"/>
        <dbReference type="EC" id="1.8.5.1"/>
    </reaction>
</comment>
<comment type="biophysicochemical properties">
    <kinetics>
        <KM evidence="3">1.42 mM for reduced glutathione (GSH)</KM>
    </kinetics>
</comment>
<comment type="subunit">
    <text evidence="5">Homodimer.</text>
</comment>
<comment type="subcellular location">
    <subcellularLocation>
        <location evidence="1 4">Cytoplasm</location>
    </subcellularLocation>
</comment>
<comment type="induction">
    <text evidence="3 4">Under oxidative stress conditions. By agents such as diamide, 1-chloro-2,4-dinitrobenzene, tert-butyl hydroperoxide (t-BOOH) and cadmium in a transcriptional factors YAP1 and/or MSN2/4-dependent manner.</text>
</comment>
<comment type="miscellaneous">
    <text evidence="2">Present with 1670 molecules/cell in log phase SD medium.</text>
</comment>
<comment type="miscellaneous">
    <text>A version of this protein truncated after amino acid 200 is not active in the beta-hydroxyethyl disulfide (HED) assay.</text>
</comment>
<comment type="similarity">
    <text evidence="8">Belongs to the GST superfamily. Omega family.</text>
</comment>
<dbReference type="EC" id="2.5.1.18" evidence="3"/>
<dbReference type="EC" id="1.8.5.1" evidence="3"/>
<dbReference type="EMBL" id="Z28301">
    <property type="protein sequence ID" value="CAA82155.1"/>
    <property type="molecule type" value="Genomic_DNA"/>
</dbReference>
<dbReference type="EMBL" id="BK006944">
    <property type="protein sequence ID" value="DAA09226.1"/>
    <property type="molecule type" value="Genomic_DNA"/>
</dbReference>
<dbReference type="PIR" id="S38153">
    <property type="entry name" value="S38153"/>
</dbReference>
<dbReference type="RefSeq" id="NP_013002.3">
    <property type="nucleotide sequence ID" value="NM_001179866.3"/>
</dbReference>
<dbReference type="PDB" id="5LKB">
    <property type="method" value="X-ray"/>
    <property type="resolution" value="1.45 A"/>
    <property type="chains" value="A/B=1-370"/>
</dbReference>
<dbReference type="PDB" id="5LKD">
    <property type="method" value="X-ray"/>
    <property type="resolution" value="1.68 A"/>
    <property type="chains" value="A/B=1-370"/>
</dbReference>
<dbReference type="PDBsum" id="5LKB"/>
<dbReference type="PDBsum" id="5LKD"/>
<dbReference type="SMR" id="P36156"/>
<dbReference type="BioGRID" id="34207">
    <property type="interactions" value="267"/>
</dbReference>
<dbReference type="FunCoup" id="P36156">
    <property type="interactions" value="144"/>
</dbReference>
<dbReference type="STRING" id="4932.YKR076W"/>
<dbReference type="iPTMnet" id="P36156"/>
<dbReference type="PaxDb" id="4932-YKR076W"/>
<dbReference type="PeptideAtlas" id="P36156"/>
<dbReference type="EnsemblFungi" id="YKR076W_mRNA">
    <property type="protein sequence ID" value="YKR076W"/>
    <property type="gene ID" value="YKR076W"/>
</dbReference>
<dbReference type="GeneID" id="853951"/>
<dbReference type="KEGG" id="sce:YKR076W"/>
<dbReference type="AGR" id="SGD:S000001784"/>
<dbReference type="SGD" id="S000001784">
    <property type="gene designation" value="ECM4"/>
</dbReference>
<dbReference type="VEuPathDB" id="FungiDB:YKR076W"/>
<dbReference type="eggNOG" id="KOG2903">
    <property type="taxonomic scope" value="Eukaryota"/>
</dbReference>
<dbReference type="GeneTree" id="ENSGT00530000065151"/>
<dbReference type="HOGENOM" id="CLU_037263_0_1_1"/>
<dbReference type="InParanoid" id="P36156"/>
<dbReference type="OMA" id="PWANRAI"/>
<dbReference type="OrthoDB" id="2309723at2759"/>
<dbReference type="BioCyc" id="YEAST:G3O-32040-MONOMER"/>
<dbReference type="BRENDA" id="1.8.5.7">
    <property type="organism ID" value="984"/>
</dbReference>
<dbReference type="SABIO-RK" id="P36156"/>
<dbReference type="BioGRID-ORCS" id="853951">
    <property type="hits" value="1 hit in 10 CRISPR screens"/>
</dbReference>
<dbReference type="PRO" id="PR:P36156"/>
<dbReference type="Proteomes" id="UP000002311">
    <property type="component" value="Chromosome XI"/>
</dbReference>
<dbReference type="RNAct" id="P36156">
    <property type="molecule type" value="protein"/>
</dbReference>
<dbReference type="GO" id="GO:0005737">
    <property type="term" value="C:cytoplasm"/>
    <property type="evidence" value="ECO:0000314"/>
    <property type="project" value="SGD"/>
</dbReference>
<dbReference type="GO" id="GO:0045174">
    <property type="term" value="F:glutathione dehydrogenase (ascorbate) activity"/>
    <property type="evidence" value="ECO:0007669"/>
    <property type="project" value="UniProtKB-EC"/>
</dbReference>
<dbReference type="GO" id="GO:0004364">
    <property type="term" value="F:glutathione transferase activity"/>
    <property type="evidence" value="ECO:0000314"/>
    <property type="project" value="SGD"/>
</dbReference>
<dbReference type="GO" id="GO:0071555">
    <property type="term" value="P:cell wall organization"/>
    <property type="evidence" value="ECO:0007669"/>
    <property type="project" value="UniProtKB-KW"/>
</dbReference>
<dbReference type="GO" id="GO:0006749">
    <property type="term" value="P:glutathione metabolic process"/>
    <property type="evidence" value="ECO:0000314"/>
    <property type="project" value="SGD"/>
</dbReference>
<dbReference type="CDD" id="cd03190">
    <property type="entry name" value="GST_C_Omega_like"/>
    <property type="match status" value="1"/>
</dbReference>
<dbReference type="FunFam" id="1.20.1050.10:FF:000038">
    <property type="entry name" value="Glutathione S-transferase omega-like 2"/>
    <property type="match status" value="1"/>
</dbReference>
<dbReference type="Gene3D" id="1.20.1050.10">
    <property type="match status" value="1"/>
</dbReference>
<dbReference type="Gene3D" id="3.40.30.10">
    <property type="entry name" value="Glutaredoxin"/>
    <property type="match status" value="1"/>
</dbReference>
<dbReference type="InterPro" id="IPR010987">
    <property type="entry name" value="Glutathione-S-Trfase_C-like"/>
</dbReference>
<dbReference type="InterPro" id="IPR036282">
    <property type="entry name" value="Glutathione-S-Trfase_C_sf"/>
</dbReference>
<dbReference type="InterPro" id="IPR004045">
    <property type="entry name" value="Glutathione_S-Trfase_N"/>
</dbReference>
<dbReference type="InterPro" id="IPR047047">
    <property type="entry name" value="GST_Omega-like_C"/>
</dbReference>
<dbReference type="InterPro" id="IPR016639">
    <property type="entry name" value="GST_Omega/GSH"/>
</dbReference>
<dbReference type="InterPro" id="IPR036249">
    <property type="entry name" value="Thioredoxin-like_sf"/>
</dbReference>
<dbReference type="PANTHER" id="PTHR32419:SF6">
    <property type="entry name" value="GLUTATHIONE S-TRANSFERASE OMEGA-LIKE 1-RELATED"/>
    <property type="match status" value="1"/>
</dbReference>
<dbReference type="PANTHER" id="PTHR32419">
    <property type="entry name" value="GLUTATHIONYL-HYDROQUINONE REDUCTASE"/>
    <property type="match status" value="1"/>
</dbReference>
<dbReference type="Pfam" id="PF13410">
    <property type="entry name" value="GST_C_2"/>
    <property type="match status" value="1"/>
</dbReference>
<dbReference type="Pfam" id="PF13409">
    <property type="entry name" value="GST_N_2"/>
    <property type="match status" value="1"/>
</dbReference>
<dbReference type="PIRSF" id="PIRSF015753">
    <property type="entry name" value="GST"/>
    <property type="match status" value="1"/>
</dbReference>
<dbReference type="SUPFAM" id="SSF47616">
    <property type="entry name" value="GST C-terminal domain-like"/>
    <property type="match status" value="1"/>
</dbReference>
<dbReference type="SUPFAM" id="SSF52833">
    <property type="entry name" value="Thioredoxin-like"/>
    <property type="match status" value="1"/>
</dbReference>
<dbReference type="PROSITE" id="PS50405">
    <property type="entry name" value="GST_CTER"/>
    <property type="match status" value="1"/>
</dbReference>
<keyword id="KW-0002">3D-structure</keyword>
<keyword id="KW-0961">Cell wall biogenesis/degradation</keyword>
<keyword id="KW-0963">Cytoplasm</keyword>
<keyword id="KW-0560">Oxidoreductase</keyword>
<keyword id="KW-1185">Reference proteome</keyword>
<keyword id="KW-0808">Transferase</keyword>
<protein>
    <recommendedName>
        <fullName evidence="6">Glutathione S-transferase omega-like 2</fullName>
        <ecNumber evidence="3">2.5.1.18</ecNumber>
    </recommendedName>
    <alternativeName>
        <fullName evidence="7">Extracellular mutant protein 4</fullName>
    </alternativeName>
    <alternativeName>
        <fullName evidence="6">Glutathione-dependent dehydroascorbate reductase</fullName>
        <ecNumber evidence="3">1.8.5.1</ecNumber>
    </alternativeName>
</protein>
<name>GTO2_YEAST</name>
<feature type="chain" id="PRO_0000086922" description="Glutathione S-transferase omega-like 2">
    <location>
        <begin position="1"/>
        <end position="370"/>
    </location>
</feature>
<feature type="domain" description="GST C-terminal">
    <location>
        <begin position="201"/>
        <end position="353"/>
    </location>
</feature>
<feature type="active site" description="Nucleophile" evidence="3 5">
    <location>
        <position position="46"/>
    </location>
</feature>
<feature type="binding site" evidence="5 10">
    <location>
        <position position="15"/>
    </location>
    <ligand>
        <name>glutathione</name>
        <dbReference type="ChEBI" id="CHEBI:57925"/>
    </ligand>
</feature>
<feature type="binding site" evidence="5 10">
    <location>
        <position position="79"/>
    </location>
    <ligand>
        <name>glutathione</name>
        <dbReference type="ChEBI" id="CHEBI:57925"/>
    </ligand>
</feature>
<feature type="binding site" evidence="5 10">
    <location>
        <position position="155"/>
    </location>
    <ligand>
        <name>glutathione</name>
        <dbReference type="ChEBI" id="CHEBI:57925"/>
    </ligand>
</feature>
<feature type="binding site" evidence="5 10">
    <location>
        <position position="158"/>
    </location>
    <ligand>
        <name>glutathione</name>
        <dbReference type="ChEBI" id="CHEBI:57925"/>
    </ligand>
</feature>
<feature type="binding site" evidence="5 10">
    <location>
        <position position="173"/>
    </location>
    <ligand>
        <name>glutathione</name>
        <dbReference type="ChEBI" id="CHEBI:57925"/>
    </ligand>
</feature>
<feature type="binding site" evidence="5 10">
    <location>
        <position position="174"/>
    </location>
    <ligand>
        <name>glutathione</name>
        <dbReference type="ChEBI" id="CHEBI:57925"/>
    </ligand>
</feature>
<feature type="mutagenesis site" description="Completely inactive as thiol transferase. No activity recovered against 1-chloro-2,4-dinitrobenzene (CDNB)." evidence="3">
    <original>C</original>
    <variation>S</variation>
    <variation>Y</variation>
    <location>
        <position position="46"/>
    </location>
</feature>
<feature type="mutagenesis site" description="No effect on thiol transferase activity. No effect on thiol transferase activity; when associated with D-173." evidence="3">
    <original>R</original>
    <variation>A</variation>
    <location>
        <position position="51"/>
    </location>
</feature>
<feature type="mutagenesis site" description="No effect on thiol transferase activity." evidence="3">
    <original>E</original>
    <variation>A</variation>
    <variation>D</variation>
    <location>
        <position position="173"/>
    </location>
</feature>
<feature type="mutagenesis site" description="No effect on thiol transferase activity." evidence="3">
    <original>S</original>
    <variation>A</variation>
    <location>
        <position position="174"/>
    </location>
</feature>
<feature type="mutagenesis site" description="No effect on thiol transferase activity." evidence="3">
    <original>L</original>
    <variation>A</variation>
    <location>
        <position position="246"/>
    </location>
</feature>
<feature type="mutagenesis site" description="No effect on thiol transferase activity." evidence="3">
    <original>G</original>
    <variation>L</variation>
    <location>
        <position position="280"/>
    </location>
</feature>
<feature type="mutagenesis site" description="Abolishes thiol transferase activity." evidence="3">
    <original>D</original>
    <variation>G</variation>
    <location>
        <position position="287"/>
    </location>
</feature>
<feature type="strand" evidence="11">
    <location>
        <begin position="37"/>
        <end position="42"/>
    </location>
</feature>
<feature type="helix" evidence="11">
    <location>
        <begin position="47"/>
        <end position="58"/>
    </location>
</feature>
<feature type="turn" evidence="11">
    <location>
        <begin position="62"/>
        <end position="64"/>
    </location>
</feature>
<feature type="strand" evidence="11">
    <location>
        <begin position="65"/>
        <end position="69"/>
    </location>
</feature>
<feature type="helix" evidence="11">
    <location>
        <begin position="95"/>
        <end position="98"/>
    </location>
</feature>
<feature type="turn" evidence="11">
    <location>
        <begin position="101"/>
        <end position="104"/>
    </location>
</feature>
<feature type="helix" evidence="12">
    <location>
        <begin position="106"/>
        <end position="109"/>
    </location>
</feature>
<feature type="turn" evidence="11">
    <location>
        <begin position="126"/>
        <end position="128"/>
    </location>
</feature>
<feature type="turn" evidence="11">
    <location>
        <begin position="134"/>
        <end position="136"/>
    </location>
</feature>
<feature type="helix" evidence="11">
    <location>
        <begin position="141"/>
        <end position="148"/>
    </location>
</feature>
<feature type="strand" evidence="11">
    <location>
        <begin position="160"/>
        <end position="163"/>
    </location>
</feature>
<feature type="turn" evidence="11">
    <location>
        <begin position="164"/>
        <end position="167"/>
    </location>
</feature>
<feature type="strand" evidence="11">
    <location>
        <begin position="168"/>
        <end position="171"/>
    </location>
</feature>
<feature type="helix" evidence="11">
    <location>
        <begin position="174"/>
        <end position="182"/>
    </location>
</feature>
<feature type="helix" evidence="11">
    <location>
        <begin position="184"/>
        <end position="189"/>
    </location>
</feature>
<feature type="helix" evidence="11">
    <location>
        <begin position="192"/>
        <end position="196"/>
    </location>
</feature>
<feature type="turn" evidence="11">
    <location>
        <begin position="202"/>
        <end position="204"/>
    </location>
</feature>
<feature type="helix" evidence="11">
    <location>
        <begin position="205"/>
        <end position="218"/>
    </location>
</feature>
<feature type="turn" evidence="11">
    <location>
        <begin position="219"/>
        <end position="221"/>
    </location>
</feature>
<feature type="helix" evidence="11">
    <location>
        <begin position="222"/>
        <end position="227"/>
    </location>
</feature>
<feature type="helix" evidence="11">
    <location>
        <begin position="232"/>
        <end position="264"/>
    </location>
</feature>
<feature type="helix" evidence="11">
    <location>
        <begin position="269"/>
        <end position="273"/>
    </location>
</feature>
<feature type="helix" evidence="11">
    <location>
        <begin position="285"/>
        <end position="297"/>
    </location>
</feature>
<feature type="turn" evidence="11">
    <location>
        <begin position="298"/>
        <end position="300"/>
    </location>
</feature>
<feature type="helix" evidence="11">
    <location>
        <begin position="301"/>
        <end position="304"/>
    </location>
</feature>
<feature type="helix" evidence="11">
    <location>
        <begin position="312"/>
        <end position="315"/>
    </location>
</feature>
<feature type="helix" evidence="11">
    <location>
        <begin position="317"/>
        <end position="329"/>
    </location>
</feature>
<feature type="helix" evidence="11">
    <location>
        <begin position="331"/>
        <end position="334"/>
    </location>
</feature>
<feature type="helix" evidence="11">
    <location>
        <begin position="339"/>
        <end position="349"/>
    </location>
</feature>
<feature type="turn" evidence="11">
    <location>
        <begin position="351"/>
        <end position="353"/>
    </location>
</feature>
<feature type="strand" evidence="11">
    <location>
        <begin position="363"/>
        <end position="367"/>
    </location>
</feature>